<keyword id="KW-0002">3D-structure</keyword>
<keyword id="KW-1185">Reference proteome</keyword>
<keyword id="KW-0687">Ribonucleoprotein</keyword>
<keyword id="KW-0689">Ribosomal protein</keyword>
<reference key="1">
    <citation type="journal article" date="2008" name="PLoS ONE">
        <title>Genetic basis of virulence attenuation revealed by comparative genomic analysis of Mycobacterium tuberculosis strain H37Ra versus H37Rv.</title>
        <authorList>
            <person name="Zheng H."/>
            <person name="Lu L."/>
            <person name="Wang B."/>
            <person name="Pu S."/>
            <person name="Zhang X."/>
            <person name="Zhu G."/>
            <person name="Shi W."/>
            <person name="Zhang L."/>
            <person name="Wang H."/>
            <person name="Wang S."/>
            <person name="Zhao G."/>
            <person name="Zhang Y."/>
        </authorList>
    </citation>
    <scope>NUCLEOTIDE SEQUENCE [LARGE SCALE GENOMIC DNA]</scope>
    <source>
        <strain>ATCC 25177 / H37Ra</strain>
    </source>
</reference>
<sequence length="47" mass="5625">MTKGKRTFQPNNRRRARVHGFRLRMRTRAGRSIVSSRRRKGRRTLSA</sequence>
<dbReference type="EMBL" id="CP000611">
    <property type="protein sequence ID" value="ABQ75752.1"/>
    <property type="molecule type" value="Genomic_DNA"/>
</dbReference>
<dbReference type="RefSeq" id="WP_003400206.1">
    <property type="nucleotide sequence ID" value="NZ_CP016972.1"/>
</dbReference>
<dbReference type="PDB" id="7F0D">
    <property type="method" value="EM"/>
    <property type="resolution" value="3.30 A"/>
    <property type="chains" value="2=1-47"/>
</dbReference>
<dbReference type="PDBsum" id="7F0D"/>
<dbReference type="SMR" id="A5U9Q2"/>
<dbReference type="GeneID" id="45427924"/>
<dbReference type="KEGG" id="mra:MRA_3963"/>
<dbReference type="eggNOG" id="COG0230">
    <property type="taxonomic scope" value="Bacteria"/>
</dbReference>
<dbReference type="HOGENOM" id="CLU_129938_2_1_11"/>
<dbReference type="Proteomes" id="UP000001988">
    <property type="component" value="Chromosome"/>
</dbReference>
<dbReference type="GO" id="GO:1990904">
    <property type="term" value="C:ribonucleoprotein complex"/>
    <property type="evidence" value="ECO:0007669"/>
    <property type="project" value="UniProtKB-KW"/>
</dbReference>
<dbReference type="GO" id="GO:0005840">
    <property type="term" value="C:ribosome"/>
    <property type="evidence" value="ECO:0007669"/>
    <property type="project" value="UniProtKB-KW"/>
</dbReference>
<dbReference type="GO" id="GO:0003735">
    <property type="term" value="F:structural constituent of ribosome"/>
    <property type="evidence" value="ECO:0007669"/>
    <property type="project" value="InterPro"/>
</dbReference>
<dbReference type="GO" id="GO:0006412">
    <property type="term" value="P:translation"/>
    <property type="evidence" value="ECO:0007669"/>
    <property type="project" value="UniProtKB-UniRule"/>
</dbReference>
<dbReference type="FunFam" id="1.10.287.3980:FF:000001">
    <property type="entry name" value="Mitochondrial ribosomal protein L34"/>
    <property type="match status" value="1"/>
</dbReference>
<dbReference type="Gene3D" id="1.10.287.3980">
    <property type="match status" value="1"/>
</dbReference>
<dbReference type="HAMAP" id="MF_00391">
    <property type="entry name" value="Ribosomal_bL34"/>
    <property type="match status" value="1"/>
</dbReference>
<dbReference type="InterPro" id="IPR000271">
    <property type="entry name" value="Ribosomal_bL34"/>
</dbReference>
<dbReference type="InterPro" id="IPR020939">
    <property type="entry name" value="Ribosomal_bL34_CS"/>
</dbReference>
<dbReference type="NCBIfam" id="TIGR01030">
    <property type="entry name" value="rpmH_bact"/>
    <property type="match status" value="1"/>
</dbReference>
<dbReference type="PANTHER" id="PTHR14503:SF4">
    <property type="entry name" value="LARGE RIBOSOMAL SUBUNIT PROTEIN BL34M"/>
    <property type="match status" value="1"/>
</dbReference>
<dbReference type="PANTHER" id="PTHR14503">
    <property type="entry name" value="MITOCHONDRIAL RIBOSOMAL PROTEIN 34 FAMILY MEMBER"/>
    <property type="match status" value="1"/>
</dbReference>
<dbReference type="Pfam" id="PF00468">
    <property type="entry name" value="Ribosomal_L34"/>
    <property type="match status" value="1"/>
</dbReference>
<dbReference type="PROSITE" id="PS00784">
    <property type="entry name" value="RIBOSOMAL_L34"/>
    <property type="match status" value="1"/>
</dbReference>
<feature type="chain" id="PRO_1000013380" description="Large ribosomal subunit protein bL34">
    <location>
        <begin position="1"/>
        <end position="47"/>
    </location>
</feature>
<feature type="helix" evidence="3">
    <location>
        <begin position="12"/>
        <end position="19"/>
    </location>
</feature>
<feature type="helix" evidence="3">
    <location>
        <begin position="21"/>
        <end position="24"/>
    </location>
</feature>
<feature type="helix" evidence="3">
    <location>
        <begin position="29"/>
        <end position="39"/>
    </location>
</feature>
<name>RL34_MYCTA</name>
<protein>
    <recommendedName>
        <fullName evidence="1">Large ribosomal subunit protein bL34</fullName>
    </recommendedName>
    <alternativeName>
        <fullName evidence="2">50S ribosomal protein L34</fullName>
    </alternativeName>
</protein>
<comment type="similarity">
    <text evidence="1">Belongs to the bacterial ribosomal protein bL34 family.</text>
</comment>
<organism>
    <name type="scientific">Mycobacterium tuberculosis (strain ATCC 25177 / H37Ra)</name>
    <dbReference type="NCBI Taxonomy" id="419947"/>
    <lineage>
        <taxon>Bacteria</taxon>
        <taxon>Bacillati</taxon>
        <taxon>Actinomycetota</taxon>
        <taxon>Actinomycetes</taxon>
        <taxon>Mycobacteriales</taxon>
        <taxon>Mycobacteriaceae</taxon>
        <taxon>Mycobacterium</taxon>
        <taxon>Mycobacterium tuberculosis complex</taxon>
    </lineage>
</organism>
<gene>
    <name evidence="1" type="primary">rpmH</name>
    <name type="ordered locus">MRA_3963</name>
</gene>
<proteinExistence type="evidence at protein level"/>
<accession>A5U9Q2</accession>
<evidence type="ECO:0000255" key="1">
    <source>
        <dbReference type="HAMAP-Rule" id="MF_00391"/>
    </source>
</evidence>
<evidence type="ECO:0000305" key="2"/>
<evidence type="ECO:0007829" key="3">
    <source>
        <dbReference type="PDB" id="7F0D"/>
    </source>
</evidence>